<reference key="1">
    <citation type="submission" date="2006-09" db="EMBL/GenBank/DDBJ databases">
        <title>Cloning and analysis of the Porphyra yezoensis gene for rps12.</title>
        <authorList>
            <person name="Wang M.Q."/>
            <person name="Mao Y.X."/>
        </authorList>
    </citation>
    <scope>NUCLEOTIDE SEQUENCE [GENOMIC DNA]</scope>
    <source>
        <strain>Qingdao</strain>
    </source>
</reference>
<reference key="2">
    <citation type="submission" date="2003-11" db="EMBL/GenBank/DDBJ databases">
        <title>Whole genome sequence of Porphyra yezoensis chloroplast.</title>
        <authorList>
            <person name="Kunimoto M."/>
            <person name="Morishima K."/>
            <person name="Yoshikawa M."/>
            <person name="Fukuda S."/>
            <person name="Kobayashi T."/>
            <person name="Kobayashi M."/>
            <person name="Okazaki T."/>
            <person name="Ohara I."/>
            <person name="Nakayama I."/>
        </authorList>
    </citation>
    <scope>NUCLEOTIDE SEQUENCE [LARGE SCALE GENOMIC DNA]</scope>
    <source>
        <strain>U-51</strain>
    </source>
</reference>
<comment type="function">
    <text evidence="1">With S4 and S5 plays an important role in translational accuracy. Located at the interface of the 30S and 50S subunits (By similarity).</text>
</comment>
<comment type="subunit">
    <text evidence="1">Part of the 30S ribosomal subunit.</text>
</comment>
<comment type="subcellular location">
    <subcellularLocation>
        <location>Plastid</location>
        <location>Chloroplast</location>
    </subcellularLocation>
</comment>
<comment type="similarity">
    <text evidence="3">Belongs to the universal ribosomal protein uS12 family.</text>
</comment>
<accession>Q1XDJ9</accession>
<keyword id="KW-0150">Chloroplast</keyword>
<keyword id="KW-0934">Plastid</keyword>
<keyword id="KW-0687">Ribonucleoprotein</keyword>
<keyword id="KW-0689">Ribosomal protein</keyword>
<keyword id="KW-0694">RNA-binding</keyword>
<keyword id="KW-0699">rRNA-binding</keyword>
<name>RR12_PYRYE</name>
<protein>
    <recommendedName>
        <fullName evidence="3">Small ribosomal subunit protein uS12c</fullName>
    </recommendedName>
    <alternativeName>
        <fullName>30S ribosomal protein S12, chloroplastic</fullName>
    </alternativeName>
</protein>
<feature type="chain" id="PRO_0000276638" description="Small ribosomal subunit protein uS12c">
    <location>
        <begin position="1"/>
        <end position="124"/>
    </location>
</feature>
<feature type="region of interest" description="Disordered" evidence="2">
    <location>
        <begin position="1"/>
        <end position="28"/>
    </location>
</feature>
<feature type="region of interest" description="Disordered" evidence="2">
    <location>
        <begin position="104"/>
        <end position="124"/>
    </location>
</feature>
<feature type="compositionally biased region" description="Basic residues" evidence="2">
    <location>
        <begin position="11"/>
        <end position="20"/>
    </location>
</feature>
<feature type="compositionally biased region" description="Basic residues" evidence="2">
    <location>
        <begin position="109"/>
        <end position="124"/>
    </location>
</feature>
<dbReference type="EMBL" id="DQ995200">
    <property type="protein sequence ID" value="ABJ91315.1"/>
    <property type="molecule type" value="Genomic_DNA"/>
</dbReference>
<dbReference type="EMBL" id="AP006715">
    <property type="protein sequence ID" value="BAE92412.1"/>
    <property type="molecule type" value="Genomic_DNA"/>
</dbReference>
<dbReference type="RefSeq" id="YP_536969.1">
    <property type="nucleotide sequence ID" value="NC_007932.1"/>
</dbReference>
<dbReference type="SMR" id="Q1XDJ9"/>
<dbReference type="GeneID" id="3978739"/>
<dbReference type="GO" id="GO:0009507">
    <property type="term" value="C:chloroplast"/>
    <property type="evidence" value="ECO:0007669"/>
    <property type="project" value="UniProtKB-SubCell"/>
</dbReference>
<dbReference type="GO" id="GO:0015935">
    <property type="term" value="C:small ribosomal subunit"/>
    <property type="evidence" value="ECO:0007669"/>
    <property type="project" value="InterPro"/>
</dbReference>
<dbReference type="GO" id="GO:0019843">
    <property type="term" value="F:rRNA binding"/>
    <property type="evidence" value="ECO:0007669"/>
    <property type="project" value="UniProtKB-UniRule"/>
</dbReference>
<dbReference type="GO" id="GO:0003735">
    <property type="term" value="F:structural constituent of ribosome"/>
    <property type="evidence" value="ECO:0007669"/>
    <property type="project" value="InterPro"/>
</dbReference>
<dbReference type="GO" id="GO:0006412">
    <property type="term" value="P:translation"/>
    <property type="evidence" value="ECO:0007669"/>
    <property type="project" value="UniProtKB-UniRule"/>
</dbReference>
<dbReference type="CDD" id="cd03368">
    <property type="entry name" value="Ribosomal_S12"/>
    <property type="match status" value="1"/>
</dbReference>
<dbReference type="FunFam" id="2.40.50.140:FF:000001">
    <property type="entry name" value="30S ribosomal protein S12"/>
    <property type="match status" value="1"/>
</dbReference>
<dbReference type="Gene3D" id="2.40.50.140">
    <property type="entry name" value="Nucleic acid-binding proteins"/>
    <property type="match status" value="1"/>
</dbReference>
<dbReference type="HAMAP" id="MF_00403_B">
    <property type="entry name" value="Ribosomal_uS12_B"/>
    <property type="match status" value="1"/>
</dbReference>
<dbReference type="InterPro" id="IPR012340">
    <property type="entry name" value="NA-bd_OB-fold"/>
</dbReference>
<dbReference type="InterPro" id="IPR006032">
    <property type="entry name" value="Ribosomal_uS12"/>
</dbReference>
<dbReference type="InterPro" id="IPR005679">
    <property type="entry name" value="Ribosomal_uS12_bac"/>
</dbReference>
<dbReference type="NCBIfam" id="TIGR00981">
    <property type="entry name" value="rpsL_bact"/>
    <property type="match status" value="1"/>
</dbReference>
<dbReference type="PANTHER" id="PTHR11652">
    <property type="entry name" value="30S RIBOSOMAL PROTEIN S12 FAMILY MEMBER"/>
    <property type="match status" value="1"/>
</dbReference>
<dbReference type="Pfam" id="PF00164">
    <property type="entry name" value="Ribosom_S12_S23"/>
    <property type="match status" value="1"/>
</dbReference>
<dbReference type="PIRSF" id="PIRSF002133">
    <property type="entry name" value="Ribosomal_S12/S23"/>
    <property type="match status" value="1"/>
</dbReference>
<dbReference type="PRINTS" id="PR01034">
    <property type="entry name" value="RIBOSOMALS12"/>
</dbReference>
<dbReference type="SUPFAM" id="SSF50249">
    <property type="entry name" value="Nucleic acid-binding proteins"/>
    <property type="match status" value="1"/>
</dbReference>
<dbReference type="PROSITE" id="PS00055">
    <property type="entry name" value="RIBOSOMAL_S12"/>
    <property type="match status" value="1"/>
</dbReference>
<gene>
    <name type="primary">rps12</name>
</gene>
<evidence type="ECO:0000250" key="1"/>
<evidence type="ECO:0000256" key="2">
    <source>
        <dbReference type="SAM" id="MobiDB-lite"/>
    </source>
</evidence>
<evidence type="ECO:0000305" key="3"/>
<sequence length="124" mass="13927">MPTIQQLVRSERRKIHKKTKSPALQSCPQRRGVCTRVYTTTPKKPNSALRKVARVRLTSGFEVTAYIPGVGHNIQEHSVVLIRGGRIKDLPGVRYHVVRGTLDAAGVKDRRKSRSKYGTKKPKS</sequence>
<geneLocation type="chloroplast"/>
<organism>
    <name type="scientific">Pyropia yezoensis</name>
    <name type="common">Susabi-nori</name>
    <name type="synonym">Porphyra yezoensis</name>
    <dbReference type="NCBI Taxonomy" id="2788"/>
    <lineage>
        <taxon>Eukaryota</taxon>
        <taxon>Rhodophyta</taxon>
        <taxon>Bangiophyceae</taxon>
        <taxon>Bangiales</taxon>
        <taxon>Bangiaceae</taxon>
        <taxon>Pyropia</taxon>
    </lineage>
</organism>
<proteinExistence type="inferred from homology"/>